<organism>
    <name type="scientific">Homo sapiens</name>
    <name type="common">Human</name>
    <dbReference type="NCBI Taxonomy" id="9606"/>
    <lineage>
        <taxon>Eukaryota</taxon>
        <taxon>Metazoa</taxon>
        <taxon>Chordata</taxon>
        <taxon>Craniata</taxon>
        <taxon>Vertebrata</taxon>
        <taxon>Euteleostomi</taxon>
        <taxon>Mammalia</taxon>
        <taxon>Eutheria</taxon>
        <taxon>Euarchontoglires</taxon>
        <taxon>Primates</taxon>
        <taxon>Haplorrhini</taxon>
        <taxon>Catarrhini</taxon>
        <taxon>Hominidae</taxon>
        <taxon>Homo</taxon>
    </lineage>
</organism>
<evidence type="ECO:0000250" key="1"/>
<evidence type="ECO:0000255" key="2">
    <source>
        <dbReference type="PROSITE-ProRule" id="PRU00042"/>
    </source>
</evidence>
<evidence type="ECO:0000255" key="3">
    <source>
        <dbReference type="PROSITE-ProRule" id="PRU00187"/>
    </source>
</evidence>
<evidence type="ECO:0000256" key="4">
    <source>
        <dbReference type="SAM" id="MobiDB-lite"/>
    </source>
</evidence>
<comment type="function">
    <text evidence="1">May be involved in transcriptional regulation.</text>
</comment>
<comment type="interaction">
    <interactant intactId="EBI-17968892">
        <id>A6NJL1</id>
    </interactant>
    <interactant intactId="EBI-12135327">
        <id>Q8WXF1-2</id>
        <label>PSPC1</label>
    </interactant>
    <organismsDiffer>false</organismsDiffer>
    <experiments>3</experiments>
</comment>
<comment type="interaction">
    <interactant intactId="EBI-17968892">
        <id>A6NJL1</id>
    </interactant>
    <interactant intactId="EBI-726876">
        <id>Q6NUQ1</id>
        <label>RINT1</label>
    </interactant>
    <organismsDiffer>false</organismsDiffer>
    <experiments>3</experiments>
</comment>
<comment type="interaction">
    <interactant intactId="EBI-17968892">
        <id>A6NJL1</id>
    </interactant>
    <interactant intactId="EBI-11522250">
        <id>O15156-2</id>
        <label>ZBTB7B</label>
    </interactant>
    <organismsDiffer>false</organismsDiffer>
    <experiments>3</experiments>
</comment>
<comment type="subcellular location">
    <subcellularLocation>
        <location evidence="3">Nucleus</location>
    </subcellularLocation>
</comment>
<reference key="1">
    <citation type="journal article" date="2004" name="Nature">
        <title>The DNA sequence and biology of human chromosome 19.</title>
        <authorList>
            <person name="Grimwood J."/>
            <person name="Gordon L.A."/>
            <person name="Olsen A.S."/>
            <person name="Terry A."/>
            <person name="Schmutz J."/>
            <person name="Lamerdin J.E."/>
            <person name="Hellsten U."/>
            <person name="Goodstein D."/>
            <person name="Couronne O."/>
            <person name="Tran-Gyamfi M."/>
            <person name="Aerts A."/>
            <person name="Altherr M."/>
            <person name="Ashworth L."/>
            <person name="Bajorek E."/>
            <person name="Black S."/>
            <person name="Branscomb E."/>
            <person name="Caenepeel S."/>
            <person name="Carrano A.V."/>
            <person name="Caoile C."/>
            <person name="Chan Y.M."/>
            <person name="Christensen M."/>
            <person name="Cleland C.A."/>
            <person name="Copeland A."/>
            <person name="Dalin E."/>
            <person name="Dehal P."/>
            <person name="Denys M."/>
            <person name="Detter J.C."/>
            <person name="Escobar J."/>
            <person name="Flowers D."/>
            <person name="Fotopulos D."/>
            <person name="Garcia C."/>
            <person name="Georgescu A.M."/>
            <person name="Glavina T."/>
            <person name="Gomez M."/>
            <person name="Gonzales E."/>
            <person name="Groza M."/>
            <person name="Hammon N."/>
            <person name="Hawkins T."/>
            <person name="Haydu L."/>
            <person name="Ho I."/>
            <person name="Huang W."/>
            <person name="Israni S."/>
            <person name="Jett J."/>
            <person name="Kadner K."/>
            <person name="Kimball H."/>
            <person name="Kobayashi A."/>
            <person name="Larionov V."/>
            <person name="Leem S.-H."/>
            <person name="Lopez F."/>
            <person name="Lou Y."/>
            <person name="Lowry S."/>
            <person name="Malfatti S."/>
            <person name="Martinez D."/>
            <person name="McCready P.M."/>
            <person name="Medina C."/>
            <person name="Morgan J."/>
            <person name="Nelson K."/>
            <person name="Nolan M."/>
            <person name="Ovcharenko I."/>
            <person name="Pitluck S."/>
            <person name="Pollard M."/>
            <person name="Popkie A.P."/>
            <person name="Predki P."/>
            <person name="Quan G."/>
            <person name="Ramirez L."/>
            <person name="Rash S."/>
            <person name="Retterer J."/>
            <person name="Rodriguez A."/>
            <person name="Rogers S."/>
            <person name="Salamov A."/>
            <person name="Salazar A."/>
            <person name="She X."/>
            <person name="Smith D."/>
            <person name="Slezak T."/>
            <person name="Solovyev V."/>
            <person name="Thayer N."/>
            <person name="Tice H."/>
            <person name="Tsai M."/>
            <person name="Ustaszewska A."/>
            <person name="Vo N."/>
            <person name="Wagner M."/>
            <person name="Wheeler J."/>
            <person name="Wu K."/>
            <person name="Xie G."/>
            <person name="Yang J."/>
            <person name="Dubchak I."/>
            <person name="Furey T.S."/>
            <person name="DeJong P."/>
            <person name="Dickson M."/>
            <person name="Gordon D."/>
            <person name="Eichler E.E."/>
            <person name="Pennacchio L.A."/>
            <person name="Richardson P."/>
            <person name="Stubbs L."/>
            <person name="Rokhsar D.S."/>
            <person name="Myers R.M."/>
            <person name="Rubin E.M."/>
            <person name="Lucas S.M."/>
        </authorList>
    </citation>
    <scope>NUCLEOTIDE SEQUENCE [LARGE SCALE GENOMIC DNA]</scope>
</reference>
<feature type="chain" id="PRO_0000332169" description="Zinc finger and SCAN domain-containing protein 5B">
    <location>
        <begin position="1"/>
        <end position="495"/>
    </location>
</feature>
<feature type="domain" description="SCAN box" evidence="3">
    <location>
        <begin position="44"/>
        <end position="126"/>
    </location>
</feature>
<feature type="zinc finger region" description="C2H2-type 1" evidence="2">
    <location>
        <begin position="355"/>
        <end position="377"/>
    </location>
</feature>
<feature type="zinc finger region" description="C2H2-type 2" evidence="2">
    <location>
        <begin position="383"/>
        <end position="405"/>
    </location>
</feature>
<feature type="zinc finger region" description="C2H2-type 3" evidence="2">
    <location>
        <begin position="411"/>
        <end position="433"/>
    </location>
</feature>
<feature type="zinc finger region" description="C2H2-type 4" evidence="2">
    <location>
        <begin position="439"/>
        <end position="461"/>
    </location>
</feature>
<feature type="zinc finger region" description="C2H2-type 5" evidence="2">
    <location>
        <begin position="467"/>
        <end position="489"/>
    </location>
</feature>
<feature type="region of interest" description="Disordered" evidence="4">
    <location>
        <begin position="1"/>
        <end position="40"/>
    </location>
</feature>
<feature type="region of interest" description="Disordered" evidence="4">
    <location>
        <begin position="150"/>
        <end position="183"/>
    </location>
</feature>
<feature type="region of interest" description="Disordered" evidence="4">
    <location>
        <begin position="227"/>
        <end position="347"/>
    </location>
</feature>
<feature type="compositionally biased region" description="Polar residues" evidence="4">
    <location>
        <begin position="17"/>
        <end position="34"/>
    </location>
</feature>
<feature type="compositionally biased region" description="Polar residues" evidence="4">
    <location>
        <begin position="161"/>
        <end position="173"/>
    </location>
</feature>
<feature type="compositionally biased region" description="Basic and acidic residues" evidence="4">
    <location>
        <begin position="250"/>
        <end position="262"/>
    </location>
</feature>
<feature type="compositionally biased region" description="Polar residues" evidence="4">
    <location>
        <begin position="292"/>
        <end position="310"/>
    </location>
</feature>
<feature type="sequence variant" id="VAR_042965" description="In dbSNP:rs527025.">
    <original>P</original>
    <variation>S</variation>
    <location>
        <position position="187"/>
    </location>
</feature>
<feature type="sequence variant" id="VAR_042966" description="In dbSNP:rs4801296.">
    <original>V</original>
    <variation>I</variation>
    <location>
        <position position="208"/>
    </location>
</feature>
<feature type="sequence variant" id="VAR_042967" description="In dbSNP:rs10425951.">
    <original>S</original>
    <variation>T</variation>
    <location>
        <position position="236"/>
    </location>
</feature>
<feature type="sequence variant" id="VAR_042968" description="In dbSNP:rs892183.">
    <original>S</original>
    <variation>T</variation>
    <location>
        <position position="304"/>
    </location>
</feature>
<feature type="sequence variant" id="VAR_042969" description="In dbSNP:rs16987048.">
    <original>M</original>
    <variation>L</variation>
    <location>
        <position position="412"/>
    </location>
</feature>
<accession>A6NJL1</accession>
<dbReference type="EMBL" id="AC024580">
    <property type="status" value="NOT_ANNOTATED_CDS"/>
    <property type="molecule type" value="Genomic_DNA"/>
</dbReference>
<dbReference type="CCDS" id="CCDS46203.1"/>
<dbReference type="RefSeq" id="NP_001073925.2">
    <property type="nucleotide sequence ID" value="NM_001080456.5"/>
</dbReference>
<dbReference type="RefSeq" id="NP_001372567.1">
    <property type="nucleotide sequence ID" value="NM_001385638.1"/>
</dbReference>
<dbReference type="RefSeq" id="XP_006723252.1">
    <property type="nucleotide sequence ID" value="XM_006723189.3"/>
</dbReference>
<dbReference type="SMR" id="A6NJL1"/>
<dbReference type="BioGRID" id="131212">
    <property type="interactions" value="5"/>
</dbReference>
<dbReference type="FunCoup" id="A6NJL1">
    <property type="interactions" value="1"/>
</dbReference>
<dbReference type="IntAct" id="A6NJL1">
    <property type="interactions" value="4"/>
</dbReference>
<dbReference type="STRING" id="9606.ENSP00000466072"/>
<dbReference type="iPTMnet" id="A6NJL1"/>
<dbReference type="PhosphoSitePlus" id="A6NJL1"/>
<dbReference type="BioMuta" id="ZSCAN5B"/>
<dbReference type="jPOST" id="A6NJL1"/>
<dbReference type="MassIVE" id="A6NJL1"/>
<dbReference type="PaxDb" id="9606-ENSP00000466072"/>
<dbReference type="PeptideAtlas" id="A6NJL1"/>
<dbReference type="ABCD" id="A6NJL1">
    <property type="antibodies" value="3 sequenced antibodies"/>
</dbReference>
<dbReference type="Antibodypedia" id="33187">
    <property type="antibodies" value="80 antibodies from 16 providers"/>
</dbReference>
<dbReference type="DNASU" id="342933"/>
<dbReference type="Ensembl" id="ENST00000586855.7">
    <property type="protein sequence ID" value="ENSP00000466072.2"/>
    <property type="gene ID" value="ENSG00000197213.11"/>
</dbReference>
<dbReference type="GeneID" id="342933"/>
<dbReference type="KEGG" id="hsa:342933"/>
<dbReference type="MANE-Select" id="ENST00000586855.7">
    <property type="protein sequence ID" value="ENSP00000466072.2"/>
    <property type="RefSeq nucleotide sequence ID" value="NM_001080456.5"/>
    <property type="RefSeq protein sequence ID" value="NP_001073925.2"/>
</dbReference>
<dbReference type="UCSC" id="uc010ygh.2">
    <property type="organism name" value="human"/>
</dbReference>
<dbReference type="AGR" id="HGNC:34246"/>
<dbReference type="CTD" id="342933"/>
<dbReference type="GeneCards" id="ZSCAN5B"/>
<dbReference type="HGNC" id="HGNC:34246">
    <property type="gene designation" value="ZSCAN5B"/>
</dbReference>
<dbReference type="HPA" id="ENSG00000197213">
    <property type="expression patterns" value="Tissue enriched (testis)"/>
</dbReference>
<dbReference type="MIM" id="620918">
    <property type="type" value="gene"/>
</dbReference>
<dbReference type="neXtProt" id="NX_A6NJL1"/>
<dbReference type="OpenTargets" id="ENSG00000197213"/>
<dbReference type="PharmGKB" id="PA162411031"/>
<dbReference type="VEuPathDB" id="HostDB:ENSG00000197213"/>
<dbReference type="eggNOG" id="KOG1721">
    <property type="taxonomic scope" value="Eukaryota"/>
</dbReference>
<dbReference type="GeneTree" id="ENSGT00940000164597"/>
<dbReference type="HOGENOM" id="CLU_002678_49_11_1"/>
<dbReference type="InParanoid" id="A6NJL1"/>
<dbReference type="OMA" id="IVMKGGP"/>
<dbReference type="OrthoDB" id="6077919at2759"/>
<dbReference type="PAN-GO" id="A6NJL1">
    <property type="GO annotations" value="3 GO annotations based on evolutionary models"/>
</dbReference>
<dbReference type="PhylomeDB" id="A6NJL1"/>
<dbReference type="TreeFam" id="TF341155"/>
<dbReference type="PathwayCommons" id="A6NJL1"/>
<dbReference type="SignaLink" id="A6NJL1"/>
<dbReference type="BioGRID-ORCS" id="342933">
    <property type="hits" value="18 hits in 1169 CRISPR screens"/>
</dbReference>
<dbReference type="GenomeRNAi" id="342933"/>
<dbReference type="Pharos" id="A6NJL1">
    <property type="development level" value="Tdark"/>
</dbReference>
<dbReference type="PRO" id="PR:A6NJL1"/>
<dbReference type="Proteomes" id="UP000005640">
    <property type="component" value="Chromosome 19"/>
</dbReference>
<dbReference type="RNAct" id="A6NJL1">
    <property type="molecule type" value="protein"/>
</dbReference>
<dbReference type="Bgee" id="ENSG00000197213">
    <property type="expression patterns" value="Expressed in male germ line stem cell (sensu Vertebrata) in testis and 20 other cell types or tissues"/>
</dbReference>
<dbReference type="ExpressionAtlas" id="A6NJL1">
    <property type="expression patterns" value="baseline and differential"/>
</dbReference>
<dbReference type="GO" id="GO:0005634">
    <property type="term" value="C:nucleus"/>
    <property type="evidence" value="ECO:0007669"/>
    <property type="project" value="UniProtKB-SubCell"/>
</dbReference>
<dbReference type="GO" id="GO:0000981">
    <property type="term" value="F:DNA-binding transcription factor activity, RNA polymerase II-specific"/>
    <property type="evidence" value="ECO:0000318"/>
    <property type="project" value="GO_Central"/>
</dbReference>
<dbReference type="GO" id="GO:0000978">
    <property type="term" value="F:RNA polymerase II cis-regulatory region sequence-specific DNA binding"/>
    <property type="evidence" value="ECO:0000318"/>
    <property type="project" value="GO_Central"/>
</dbReference>
<dbReference type="GO" id="GO:0008270">
    <property type="term" value="F:zinc ion binding"/>
    <property type="evidence" value="ECO:0007669"/>
    <property type="project" value="UniProtKB-KW"/>
</dbReference>
<dbReference type="GO" id="GO:0006357">
    <property type="term" value="P:regulation of transcription by RNA polymerase II"/>
    <property type="evidence" value="ECO:0000318"/>
    <property type="project" value="GO_Central"/>
</dbReference>
<dbReference type="CDD" id="cd07936">
    <property type="entry name" value="SCAN"/>
    <property type="match status" value="1"/>
</dbReference>
<dbReference type="FunFam" id="3.30.160.60:FF:001963">
    <property type="entry name" value="Replication initiator 1"/>
    <property type="match status" value="1"/>
</dbReference>
<dbReference type="FunFam" id="3.30.160.60:FF:001718">
    <property type="entry name" value="Zinc finger and SCAN domain containing 5A"/>
    <property type="match status" value="1"/>
</dbReference>
<dbReference type="FunFam" id="3.30.160.60:FF:000202">
    <property type="entry name" value="Zinc finger protein 574"/>
    <property type="match status" value="1"/>
</dbReference>
<dbReference type="FunFam" id="3.30.160.60:FF:000290">
    <property type="entry name" value="Zinc finger protein 697 isoform X1"/>
    <property type="match status" value="2"/>
</dbReference>
<dbReference type="Gene3D" id="3.30.160.60">
    <property type="entry name" value="Classic Zinc Finger"/>
    <property type="match status" value="5"/>
</dbReference>
<dbReference type="Gene3D" id="1.10.4020.10">
    <property type="entry name" value="DNA breaking-rejoining enzymes"/>
    <property type="match status" value="1"/>
</dbReference>
<dbReference type="InterPro" id="IPR003309">
    <property type="entry name" value="SCAN_dom"/>
</dbReference>
<dbReference type="InterPro" id="IPR038269">
    <property type="entry name" value="SCAN_sf"/>
</dbReference>
<dbReference type="InterPro" id="IPR050331">
    <property type="entry name" value="Zinc_finger"/>
</dbReference>
<dbReference type="InterPro" id="IPR036236">
    <property type="entry name" value="Znf_C2H2_sf"/>
</dbReference>
<dbReference type="InterPro" id="IPR013087">
    <property type="entry name" value="Znf_C2H2_type"/>
</dbReference>
<dbReference type="PANTHER" id="PTHR16515:SF49">
    <property type="entry name" value="GASTRULA ZINC FINGER PROTEIN XLCGF49.1-LIKE-RELATED"/>
    <property type="match status" value="1"/>
</dbReference>
<dbReference type="PANTHER" id="PTHR16515">
    <property type="entry name" value="PR DOMAIN ZINC FINGER PROTEIN"/>
    <property type="match status" value="1"/>
</dbReference>
<dbReference type="Pfam" id="PF02023">
    <property type="entry name" value="SCAN"/>
    <property type="match status" value="1"/>
</dbReference>
<dbReference type="Pfam" id="PF00096">
    <property type="entry name" value="zf-C2H2"/>
    <property type="match status" value="4"/>
</dbReference>
<dbReference type="Pfam" id="PF12874">
    <property type="entry name" value="zf-met"/>
    <property type="match status" value="1"/>
</dbReference>
<dbReference type="SMART" id="SM00431">
    <property type="entry name" value="SCAN"/>
    <property type="match status" value="1"/>
</dbReference>
<dbReference type="SMART" id="SM00355">
    <property type="entry name" value="ZnF_C2H2"/>
    <property type="match status" value="5"/>
</dbReference>
<dbReference type="SUPFAM" id="SSF57667">
    <property type="entry name" value="beta-beta-alpha zinc fingers"/>
    <property type="match status" value="3"/>
</dbReference>
<dbReference type="SUPFAM" id="SSF47353">
    <property type="entry name" value="Retrovirus capsid dimerization domain-like"/>
    <property type="match status" value="1"/>
</dbReference>
<dbReference type="PROSITE" id="PS50804">
    <property type="entry name" value="SCAN_BOX"/>
    <property type="match status" value="1"/>
</dbReference>
<dbReference type="PROSITE" id="PS00028">
    <property type="entry name" value="ZINC_FINGER_C2H2_1"/>
    <property type="match status" value="5"/>
</dbReference>
<dbReference type="PROSITE" id="PS50157">
    <property type="entry name" value="ZINC_FINGER_C2H2_2"/>
    <property type="match status" value="5"/>
</dbReference>
<gene>
    <name type="primary">ZSCAN5B</name>
</gene>
<proteinExistence type="evidence at protein level"/>
<name>ZSA5B_HUMAN</name>
<sequence>MAANWTLSWGQGGPCNSPGSDTPRSVASPETQLGNHDRNPETWHMNFRMFSCPEESDPIQALRKLTELCHLWLRPDLHTKEQILDMLVMEQFMISMPQELQVLVKVNGVQSCKDLEDLLRNNRRPKKWSIVNLLGKEYLMLNSDVEMAEAPASVRDDPRDVSSQWASSVNQMHPGTGQARREQQILPRVAALSRRQGEDFLLHKSIDVTGDPNSPRPKQTLEKDLKENREENPGLSSPEPQLPKSPNLVRAKEGKEPQKRASVENVDADTPSACVVEREALTHSGNRGDALNLSSPKRSKPDASSISQEEPQGEATPVGNRESPGQAEINPVHSPGPAGPVSHPDGQEAKALPPFACDVCNKSFKYFSQLSIHRRSHTGDRPFQCDLCRKRFLQPSDLRVHQRVHTGERPYMCDVCQKRFAHESTLQGHKRIHTGERPFKCKYCSKVFSHKGNLNVHQRTHSGEKPYKCPTCQKAFRQLGTFKRHLKTHRETTSQ</sequence>
<keyword id="KW-0238">DNA-binding</keyword>
<keyword id="KW-0479">Metal-binding</keyword>
<keyword id="KW-0539">Nucleus</keyword>
<keyword id="KW-1267">Proteomics identification</keyword>
<keyword id="KW-1185">Reference proteome</keyword>
<keyword id="KW-0677">Repeat</keyword>
<keyword id="KW-0804">Transcription</keyword>
<keyword id="KW-0805">Transcription regulation</keyword>
<keyword id="KW-0862">Zinc</keyword>
<keyword id="KW-0863">Zinc-finger</keyword>
<protein>
    <recommendedName>
        <fullName>Zinc finger and SCAN domain-containing protein 5B</fullName>
    </recommendedName>
</protein>